<accession>Q54TA5</accession>
<gene>
    <name type="primary">tbc1d5B</name>
    <name type="ORF">DDB_G0281891</name>
</gene>
<reference key="1">
    <citation type="journal article" date="2005" name="Nature">
        <title>The genome of the social amoeba Dictyostelium discoideum.</title>
        <authorList>
            <person name="Eichinger L."/>
            <person name="Pachebat J.A."/>
            <person name="Gloeckner G."/>
            <person name="Rajandream M.A."/>
            <person name="Sucgang R."/>
            <person name="Berriman M."/>
            <person name="Song J."/>
            <person name="Olsen R."/>
            <person name="Szafranski K."/>
            <person name="Xu Q."/>
            <person name="Tunggal B."/>
            <person name="Kummerfeld S."/>
            <person name="Madera M."/>
            <person name="Konfortov B.A."/>
            <person name="Rivero F."/>
            <person name="Bankier A.T."/>
            <person name="Lehmann R."/>
            <person name="Hamlin N."/>
            <person name="Davies R."/>
            <person name="Gaudet P."/>
            <person name="Fey P."/>
            <person name="Pilcher K."/>
            <person name="Chen G."/>
            <person name="Saunders D."/>
            <person name="Sodergren E.J."/>
            <person name="Davis P."/>
            <person name="Kerhornou A."/>
            <person name="Nie X."/>
            <person name="Hall N."/>
            <person name="Anjard C."/>
            <person name="Hemphill L."/>
            <person name="Bason N."/>
            <person name="Farbrother P."/>
            <person name="Desany B."/>
            <person name="Just E."/>
            <person name="Morio T."/>
            <person name="Rost R."/>
            <person name="Churcher C.M."/>
            <person name="Cooper J."/>
            <person name="Haydock S."/>
            <person name="van Driessche N."/>
            <person name="Cronin A."/>
            <person name="Goodhead I."/>
            <person name="Muzny D.M."/>
            <person name="Mourier T."/>
            <person name="Pain A."/>
            <person name="Lu M."/>
            <person name="Harper D."/>
            <person name="Lindsay R."/>
            <person name="Hauser H."/>
            <person name="James K.D."/>
            <person name="Quiles M."/>
            <person name="Madan Babu M."/>
            <person name="Saito T."/>
            <person name="Buchrieser C."/>
            <person name="Wardroper A."/>
            <person name="Felder M."/>
            <person name="Thangavelu M."/>
            <person name="Johnson D."/>
            <person name="Knights A."/>
            <person name="Loulseged H."/>
            <person name="Mungall K.L."/>
            <person name="Oliver K."/>
            <person name="Price C."/>
            <person name="Quail M.A."/>
            <person name="Urushihara H."/>
            <person name="Hernandez J."/>
            <person name="Rabbinowitsch E."/>
            <person name="Steffen D."/>
            <person name="Sanders M."/>
            <person name="Ma J."/>
            <person name="Kohara Y."/>
            <person name="Sharp S."/>
            <person name="Simmonds M.N."/>
            <person name="Spiegler S."/>
            <person name="Tivey A."/>
            <person name="Sugano S."/>
            <person name="White B."/>
            <person name="Walker D."/>
            <person name="Woodward J.R."/>
            <person name="Winckler T."/>
            <person name="Tanaka Y."/>
            <person name="Shaulsky G."/>
            <person name="Schleicher M."/>
            <person name="Weinstock G.M."/>
            <person name="Rosenthal A."/>
            <person name="Cox E.C."/>
            <person name="Chisholm R.L."/>
            <person name="Gibbs R.A."/>
            <person name="Loomis W.F."/>
            <person name="Platzer M."/>
            <person name="Kay R.R."/>
            <person name="Williams J.G."/>
            <person name="Dear P.H."/>
            <person name="Noegel A.A."/>
            <person name="Barrell B.G."/>
            <person name="Kuspa A."/>
        </authorList>
    </citation>
    <scope>NUCLEOTIDE SEQUENCE [LARGE SCALE GENOMIC DNA]</scope>
    <source>
        <strain>AX4</strain>
    </source>
</reference>
<feature type="chain" id="PRO_0000388364" description="TBC1 domain family member 5 homolog B">
    <location>
        <begin position="1"/>
        <end position="1016"/>
    </location>
</feature>
<feature type="domain" description="Rab-GAP TBC" evidence="2">
    <location>
        <begin position="280"/>
        <end position="636"/>
    </location>
</feature>
<feature type="region of interest" description="Disordered" evidence="3">
    <location>
        <begin position="1"/>
        <end position="23"/>
    </location>
</feature>
<feature type="region of interest" description="Disordered" evidence="3">
    <location>
        <begin position="60"/>
        <end position="109"/>
    </location>
</feature>
<feature type="region of interest" description="Disordered" evidence="3">
    <location>
        <begin position="179"/>
        <end position="209"/>
    </location>
</feature>
<feature type="region of interest" description="Disordered" evidence="3">
    <location>
        <begin position="463"/>
        <end position="566"/>
    </location>
</feature>
<feature type="region of interest" description="Disordered" evidence="3">
    <location>
        <begin position="704"/>
        <end position="872"/>
    </location>
</feature>
<feature type="compositionally biased region" description="Polar residues" evidence="3">
    <location>
        <begin position="12"/>
        <end position="23"/>
    </location>
</feature>
<feature type="compositionally biased region" description="Low complexity" evidence="3">
    <location>
        <begin position="79"/>
        <end position="88"/>
    </location>
</feature>
<feature type="compositionally biased region" description="Low complexity" evidence="3">
    <location>
        <begin position="467"/>
        <end position="525"/>
    </location>
</feature>
<feature type="compositionally biased region" description="Pro residues" evidence="3">
    <location>
        <begin position="526"/>
        <end position="544"/>
    </location>
</feature>
<feature type="compositionally biased region" description="Low complexity" evidence="3">
    <location>
        <begin position="545"/>
        <end position="558"/>
    </location>
</feature>
<feature type="compositionally biased region" description="Polar residues" evidence="3">
    <location>
        <begin position="704"/>
        <end position="717"/>
    </location>
</feature>
<feature type="compositionally biased region" description="Low complexity" evidence="3">
    <location>
        <begin position="718"/>
        <end position="755"/>
    </location>
</feature>
<feature type="compositionally biased region" description="Low complexity" evidence="3">
    <location>
        <begin position="766"/>
        <end position="789"/>
    </location>
</feature>
<feature type="compositionally biased region" description="Polar residues" evidence="3">
    <location>
        <begin position="790"/>
        <end position="806"/>
    </location>
</feature>
<feature type="compositionally biased region" description="Low complexity" evidence="3">
    <location>
        <begin position="807"/>
        <end position="872"/>
    </location>
</feature>
<name>TBC5B_DICDI</name>
<protein>
    <recommendedName>
        <fullName>TBC1 domain family member 5 homolog B</fullName>
    </recommendedName>
</protein>
<organism>
    <name type="scientific">Dictyostelium discoideum</name>
    <name type="common">Social amoeba</name>
    <dbReference type="NCBI Taxonomy" id="44689"/>
    <lineage>
        <taxon>Eukaryota</taxon>
        <taxon>Amoebozoa</taxon>
        <taxon>Evosea</taxon>
        <taxon>Eumycetozoa</taxon>
        <taxon>Dictyostelia</taxon>
        <taxon>Dictyosteliales</taxon>
        <taxon>Dictyosteliaceae</taxon>
        <taxon>Dictyostelium</taxon>
    </lineage>
</organism>
<comment type="function">
    <text evidence="1">May act as a GTPase-activating protein for Rab family protein(s).</text>
</comment>
<evidence type="ECO:0000250" key="1"/>
<evidence type="ECO:0000255" key="2">
    <source>
        <dbReference type="PROSITE-ProRule" id="PRU00163"/>
    </source>
</evidence>
<evidence type="ECO:0000256" key="3">
    <source>
        <dbReference type="SAM" id="MobiDB-lite"/>
    </source>
</evidence>
<sequence>MDTSGFLDLDINSGTTTPNIRNSVTTSNDIMSSIFDTIPTKEKKVDAAVESIFGTEAANSPLISSSIPPIPIEASTSTQQQQQQQQQQEEIIPSQPISVTKENTVTTTTTTTATTAVPTTTTTPTSTLINSEPIVVNPLEVNINTKVDDSDSDQDEQIKKENVVHEIFTPIVSIINNNNNNNNNEIDNNNNGNSNENTTTTTTNKDMNNSFSMGVTTASKDEHIISTTTVGTIEQEIHEKQEEPLISPLQSEFNKIFFSTIPLEKKPLEILKMNAFTGALKYSPLRGIAWKLFLGGLDINRVDKWERDITQQRKRYEKLKEEHCFDPRNSNSTYDPLSQNDDSPWNKFFKNLDTQKIIKIDLERTHPDNDFFSNPVIREMMATILFVYSKTNGIISYRQGMHELLAPIIYLYNQEYSSYKKLDENSSSTLVDFIYNIKYLEHDTFAIFERLMKFTSDWYAPAPTQQTNNSNNSNNTNNNNTTTSPSSSSSSSSSSTTTAAATTVSSSTSTSSSSSTITSSSSSTVSPPPPSSSSSPSPPPPPPLGSNSPTVASSSSSSVQDNEEEELSSKCNDVVLKCKYIHSILLKQKDFELYQHLDSLDIEPQIYLLRWIRLLFGREFHFDDVLNIWDALFAYGENLILIDYFCISMLTYIREHLLKSDSIYALKRIYKYPPVEDVYMLIKKALEIKDSNCSIAGMVKTAQPPTTLSSSGSRQIPNNNNNNNNNNNNNNNNNNNNNNSNNNINNNNNNSNNNITTPSTQANTLPFPETSTFESTTSSFQPYSSQLSSANTTPIDPLSNKTTPLISSTSNVSNTPNITSTSTLLSSSSSSSSSTTTPLQSHTPILTHNNNNSHFSPSPSSSSSSLNNSSHVSIPVKSNVKDIFANSKESDLFSLFSTATTPINNNTSSLSISNPTISIGQARTLNKHKSMTLPSSPLISQDSEALKQLKNTQIEFGNQLKEVLPFLEKGKNFLLGNEDELSKSEIDDFIKALEKVKQIQEILSNNNINNNNENKL</sequence>
<dbReference type="EMBL" id="AAFI02000043">
    <property type="protein sequence ID" value="EAL66505.1"/>
    <property type="molecule type" value="Genomic_DNA"/>
</dbReference>
<dbReference type="RefSeq" id="XP_640484.1">
    <property type="nucleotide sequence ID" value="XM_635392.1"/>
</dbReference>
<dbReference type="SMR" id="Q54TA5"/>
<dbReference type="FunCoup" id="Q54TA5">
    <property type="interactions" value="149"/>
</dbReference>
<dbReference type="STRING" id="44689.Q54TA5"/>
<dbReference type="GlyGen" id="Q54TA5">
    <property type="glycosylation" value="1 site"/>
</dbReference>
<dbReference type="PaxDb" id="44689-DDB0235326"/>
<dbReference type="EnsemblProtists" id="EAL66505">
    <property type="protein sequence ID" value="EAL66505"/>
    <property type="gene ID" value="DDB_G0281891"/>
</dbReference>
<dbReference type="GeneID" id="8623298"/>
<dbReference type="KEGG" id="ddi:DDB_G0281891"/>
<dbReference type="dictyBase" id="DDB_G0281891">
    <property type="gene designation" value="rbg3"/>
</dbReference>
<dbReference type="VEuPathDB" id="AmoebaDB:DDB_G0281891"/>
<dbReference type="eggNOG" id="KOG1091">
    <property type="taxonomic scope" value="Eukaryota"/>
</dbReference>
<dbReference type="HOGENOM" id="CLU_296919_0_0_1"/>
<dbReference type="InParanoid" id="Q54TA5"/>
<dbReference type="OMA" id="DYFCISM"/>
<dbReference type="PRO" id="PR:Q54TA5"/>
<dbReference type="Proteomes" id="UP000002195">
    <property type="component" value="Chromosome 3"/>
</dbReference>
<dbReference type="GO" id="GO:0031252">
    <property type="term" value="C:cell leading edge"/>
    <property type="evidence" value="ECO:0000314"/>
    <property type="project" value="dictyBase"/>
</dbReference>
<dbReference type="GO" id="GO:0005829">
    <property type="term" value="C:cytosol"/>
    <property type="evidence" value="ECO:0000314"/>
    <property type="project" value="dictyBase"/>
</dbReference>
<dbReference type="GO" id="GO:0010008">
    <property type="term" value="C:endosome membrane"/>
    <property type="evidence" value="ECO:0000318"/>
    <property type="project" value="GO_Central"/>
</dbReference>
<dbReference type="GO" id="GO:0005794">
    <property type="term" value="C:Golgi apparatus"/>
    <property type="evidence" value="ECO:0000318"/>
    <property type="project" value="GO_Central"/>
</dbReference>
<dbReference type="GO" id="GO:0030904">
    <property type="term" value="C:retromer complex"/>
    <property type="evidence" value="ECO:0000318"/>
    <property type="project" value="GO_Central"/>
</dbReference>
<dbReference type="GO" id="GO:0005096">
    <property type="term" value="F:GTPase activator activity"/>
    <property type="evidence" value="ECO:0000318"/>
    <property type="project" value="GO_Central"/>
</dbReference>
<dbReference type="GO" id="GO:0007193">
    <property type="term" value="P:adenylate cyclase-inhibiting G protein-coupled receptor signaling pathway"/>
    <property type="evidence" value="ECO:0000315"/>
    <property type="project" value="dictyBase"/>
</dbReference>
<dbReference type="GO" id="GO:1903665">
    <property type="term" value="P:negative regulation of asexual reproduction"/>
    <property type="evidence" value="ECO:0000315"/>
    <property type="project" value="dictyBase"/>
</dbReference>
<dbReference type="GO" id="GO:0031156">
    <property type="term" value="P:regulation of sorocarp development"/>
    <property type="evidence" value="ECO:0000315"/>
    <property type="project" value="dictyBase"/>
</dbReference>
<dbReference type="GO" id="GO:0031000">
    <property type="term" value="P:response to caffeine"/>
    <property type="evidence" value="ECO:0000315"/>
    <property type="project" value="dictyBase"/>
</dbReference>
<dbReference type="GO" id="GO:0042147">
    <property type="term" value="P:retrograde transport, endosome to Golgi"/>
    <property type="evidence" value="ECO:0000318"/>
    <property type="project" value="GO_Central"/>
</dbReference>
<dbReference type="FunFam" id="1.10.472.80:FF:000038">
    <property type="entry name" value="TBC1 domain family member 5"/>
    <property type="match status" value="1"/>
</dbReference>
<dbReference type="FunFam" id="1.10.8.270:FF:000011">
    <property type="entry name" value="TBC1 domain family member 5"/>
    <property type="match status" value="1"/>
</dbReference>
<dbReference type="Gene3D" id="1.10.8.270">
    <property type="entry name" value="putative rabgap domain of human tbc1 domain family member 14 like domains"/>
    <property type="match status" value="1"/>
</dbReference>
<dbReference type="Gene3D" id="1.10.472.80">
    <property type="entry name" value="Ypt/Rab-GAP domain of gyp1p, domain 3"/>
    <property type="match status" value="1"/>
</dbReference>
<dbReference type="InterPro" id="IPR000195">
    <property type="entry name" value="Rab-GAP-TBC_dom"/>
</dbReference>
<dbReference type="InterPro" id="IPR035969">
    <property type="entry name" value="Rab-GAP_TBC_sf"/>
</dbReference>
<dbReference type="PANTHER" id="PTHR22957:SF337">
    <property type="entry name" value="TBC1 DOMAIN FAMILY MEMBER 5"/>
    <property type="match status" value="1"/>
</dbReference>
<dbReference type="PANTHER" id="PTHR22957">
    <property type="entry name" value="TBC1 DOMAIN FAMILY MEMBER GTPASE-ACTIVATING PROTEIN"/>
    <property type="match status" value="1"/>
</dbReference>
<dbReference type="Pfam" id="PF00566">
    <property type="entry name" value="RabGAP-TBC"/>
    <property type="match status" value="2"/>
</dbReference>
<dbReference type="SMART" id="SM00164">
    <property type="entry name" value="TBC"/>
    <property type="match status" value="1"/>
</dbReference>
<dbReference type="SUPFAM" id="SSF47923">
    <property type="entry name" value="Ypt/Rab-GAP domain of gyp1p"/>
    <property type="match status" value="2"/>
</dbReference>
<dbReference type="PROSITE" id="PS50086">
    <property type="entry name" value="TBC_RABGAP"/>
    <property type="match status" value="1"/>
</dbReference>
<proteinExistence type="inferred from homology"/>
<keyword id="KW-0343">GTPase activation</keyword>
<keyword id="KW-1185">Reference proteome</keyword>